<proteinExistence type="evidence at protein level"/>
<name>XYN3_ASPKW</name>
<organism>
    <name type="scientific">Aspergillus kawachii (strain NBRC 4308)</name>
    <name type="common">White koji mold</name>
    <name type="synonym">Aspergillus awamori var. kawachi</name>
    <dbReference type="NCBI Taxonomy" id="1033177"/>
    <lineage>
        <taxon>Eukaryota</taxon>
        <taxon>Fungi</taxon>
        <taxon>Dikarya</taxon>
        <taxon>Ascomycota</taxon>
        <taxon>Pezizomycotina</taxon>
        <taxon>Eurotiomycetes</taxon>
        <taxon>Eurotiomycetidae</taxon>
        <taxon>Eurotiales</taxon>
        <taxon>Aspergillaceae</taxon>
        <taxon>Aspergillus</taxon>
        <taxon>Aspergillus subgen. Circumdati</taxon>
    </lineage>
</organism>
<dbReference type="EC" id="3.2.1.8"/>
<dbReference type="EMBL" id="S45138">
    <property type="protein sequence ID" value="AAC60542.1"/>
    <property type="molecule type" value="Genomic_DNA"/>
</dbReference>
<dbReference type="EMBL" id="D14848">
    <property type="protein sequence ID" value="BAA03576.1"/>
    <property type="molecule type" value="Genomic_DNA"/>
</dbReference>
<dbReference type="EMBL" id="DF126466">
    <property type="protein sequence ID" value="GAA89022.1"/>
    <property type="molecule type" value="Genomic_DNA"/>
</dbReference>
<dbReference type="PDB" id="1BK1">
    <property type="method" value="X-ray"/>
    <property type="resolution" value="2.00 A"/>
    <property type="chains" value="A=28-211"/>
</dbReference>
<dbReference type="PDB" id="3RI8">
    <property type="method" value="X-ray"/>
    <property type="resolution" value="2.00 A"/>
    <property type="chains" value="A=28-211"/>
</dbReference>
<dbReference type="PDB" id="3RI9">
    <property type="method" value="X-ray"/>
    <property type="resolution" value="2.00 A"/>
    <property type="chains" value="A=28-211"/>
</dbReference>
<dbReference type="PDBsum" id="1BK1"/>
<dbReference type="PDBsum" id="3RI8"/>
<dbReference type="PDBsum" id="3RI9"/>
<dbReference type="SMR" id="P33557"/>
<dbReference type="STRING" id="1033177.P33557"/>
<dbReference type="CAZy" id="GH11">
    <property type="family name" value="Glycoside Hydrolase Family 11"/>
</dbReference>
<dbReference type="VEuPathDB" id="FungiDB:AKAW_07136"/>
<dbReference type="eggNOG" id="ENOG502RXA7">
    <property type="taxonomic scope" value="Eukaryota"/>
</dbReference>
<dbReference type="InParanoid" id="P33557"/>
<dbReference type="OrthoDB" id="62301at5052"/>
<dbReference type="BRENDA" id="3.2.1.8">
    <property type="organism ID" value="514"/>
</dbReference>
<dbReference type="UniPathway" id="UPA00114"/>
<dbReference type="EvolutionaryTrace" id="P33557"/>
<dbReference type="GO" id="GO:0005576">
    <property type="term" value="C:extracellular region"/>
    <property type="evidence" value="ECO:0007669"/>
    <property type="project" value="UniProtKB-SubCell"/>
</dbReference>
<dbReference type="GO" id="GO:0031176">
    <property type="term" value="F:endo-1,4-beta-xylanase activity"/>
    <property type="evidence" value="ECO:0007669"/>
    <property type="project" value="UniProtKB-EC"/>
</dbReference>
<dbReference type="GO" id="GO:0045493">
    <property type="term" value="P:xylan catabolic process"/>
    <property type="evidence" value="ECO:0007669"/>
    <property type="project" value="UniProtKB-UniPathway"/>
</dbReference>
<dbReference type="FunFam" id="2.60.120.180:FF:000002">
    <property type="entry name" value="Endo-1,4-beta-xylanase A"/>
    <property type="match status" value="1"/>
</dbReference>
<dbReference type="Gene3D" id="2.60.120.180">
    <property type="match status" value="1"/>
</dbReference>
<dbReference type="InterPro" id="IPR013320">
    <property type="entry name" value="ConA-like_dom_sf"/>
</dbReference>
<dbReference type="InterPro" id="IPR013319">
    <property type="entry name" value="GH11/12"/>
</dbReference>
<dbReference type="InterPro" id="IPR018208">
    <property type="entry name" value="GH11_AS_1"/>
</dbReference>
<dbReference type="InterPro" id="IPR033119">
    <property type="entry name" value="GH11_AS_2"/>
</dbReference>
<dbReference type="InterPro" id="IPR033123">
    <property type="entry name" value="GH11_dom"/>
</dbReference>
<dbReference type="InterPro" id="IPR001137">
    <property type="entry name" value="Glyco_hydro_11"/>
</dbReference>
<dbReference type="PANTHER" id="PTHR46828">
    <property type="entry name" value="ENDO-1,4-BETA-XYLANASE A-RELATED"/>
    <property type="match status" value="1"/>
</dbReference>
<dbReference type="PANTHER" id="PTHR46828:SF2">
    <property type="entry name" value="ENDO-1,4-BETA-XYLANASE A-RELATED"/>
    <property type="match status" value="1"/>
</dbReference>
<dbReference type="Pfam" id="PF00457">
    <property type="entry name" value="Glyco_hydro_11"/>
    <property type="match status" value="1"/>
</dbReference>
<dbReference type="PRINTS" id="PR00911">
    <property type="entry name" value="GLHYDRLASE11"/>
</dbReference>
<dbReference type="SUPFAM" id="SSF49899">
    <property type="entry name" value="Concanavalin A-like lectins/glucanases"/>
    <property type="match status" value="1"/>
</dbReference>
<dbReference type="PROSITE" id="PS00776">
    <property type="entry name" value="GH11_1"/>
    <property type="match status" value="1"/>
</dbReference>
<dbReference type="PROSITE" id="PS00777">
    <property type="entry name" value="GH11_2"/>
    <property type="match status" value="1"/>
</dbReference>
<dbReference type="PROSITE" id="PS51761">
    <property type="entry name" value="GH11_3"/>
    <property type="match status" value="1"/>
</dbReference>
<protein>
    <recommendedName>
        <fullName>Endo-1,4-beta-xylanase 3</fullName>
        <shortName>Xylanase 3</shortName>
        <ecNumber>3.2.1.8</ecNumber>
    </recommendedName>
    <alternativeName>
        <fullName>1,4-beta-D-xylan xylanohydrolase 3</fullName>
    </alternativeName>
    <alternativeName>
        <fullName>Xylanase C</fullName>
    </alternativeName>
</protein>
<keyword id="KW-0002">3D-structure</keyword>
<keyword id="KW-0119">Carbohydrate metabolism</keyword>
<keyword id="KW-0903">Direct protein sequencing</keyword>
<keyword id="KW-1015">Disulfide bond</keyword>
<keyword id="KW-0326">Glycosidase</keyword>
<keyword id="KW-0378">Hydrolase</keyword>
<keyword id="KW-0624">Polysaccharide degradation</keyword>
<keyword id="KW-0964">Secreted</keyword>
<keyword id="KW-0732">Signal</keyword>
<keyword id="KW-0858">Xylan degradation</keyword>
<accession>P33557</accession>
<accession>G7XQI2</accession>
<sequence>MKVTAAFAGLLVTAFAAPVPEPVLVSRSAGINYVQNYNGNLGDFTYDESAGTFSMYWEDGVSSDFVVGLGWTTGSSNAITYSAEYSASGSSSYLAVYGWVNYPQAEYYIVEDYGDYNPCSSATSLGTVYSDGSTYQVCTDTRTNEPSITGTSTFTQYFSVRESTRTSGTVTVANHFNFWAQHGFGNSDFNYQVMAVEAWSGAGSASVTISS</sequence>
<reference key="1">
    <citation type="journal article" date="1992" name="Biosci. Biotechnol. Biochem.">
        <title>Cloning and sequencing of the xynC gene encoding acid xylanase of Aspergillus kawachii.</title>
        <authorList>
            <person name="Ito K."/>
            <person name="Iwashita K."/>
            <person name="Iwano K."/>
        </authorList>
    </citation>
    <scope>NUCLEOTIDE SEQUENCE [GENOMIC DNA]</scope>
    <scope>PROTEIN SEQUENCE OF 28-34</scope>
    <source>
        <strain>NBRC 4308</strain>
    </source>
</reference>
<reference key="2">
    <citation type="journal article" date="2011" name="Eukaryot. Cell">
        <title>Genome sequence of the white koji mold Aspergillus kawachii IFO 4308, used for brewing the Japanese distilled spirit shochu.</title>
        <authorList>
            <person name="Futagami T."/>
            <person name="Mori K."/>
            <person name="Yamashita A."/>
            <person name="Wada S."/>
            <person name="Kajiwara Y."/>
            <person name="Takashita H."/>
            <person name="Omori T."/>
            <person name="Takegawa K."/>
            <person name="Tashiro K."/>
            <person name="Kuhara S."/>
            <person name="Goto M."/>
        </authorList>
    </citation>
    <scope>NUCLEOTIDE SEQUENCE [LARGE SCALE GENOMIC DNA]</scope>
    <source>
        <strain>NBRC 4308</strain>
    </source>
</reference>
<reference key="3">
    <citation type="journal article" date="1998" name="Protein Eng.">
        <title>Crystallographic and mutational analyses of an extremely acidophilic and acid-stable xylanase: biased distribution of acidic residues and importance of Asp-37 for catalysis at low pH.</title>
        <authorList>
            <person name="Fushinobu S."/>
            <person name="Ito K."/>
            <person name="Konno M."/>
            <person name="Wakagi T."/>
            <person name="Matsuzawa H."/>
        </authorList>
    </citation>
    <scope>X-RAY CRYSTALLOGRAPHY (2.0 ANGSTROMS) OF 29-210</scope>
    <source>
        <strain>NBRC 4308</strain>
    </source>
</reference>
<evidence type="ECO:0000255" key="1">
    <source>
        <dbReference type="PROSITE-ProRule" id="PRU01097"/>
    </source>
</evidence>
<evidence type="ECO:0000255" key="2">
    <source>
        <dbReference type="PROSITE-ProRule" id="PRU10062"/>
    </source>
</evidence>
<evidence type="ECO:0000269" key="3">
    <source>
    </source>
</evidence>
<evidence type="ECO:0000305" key="4"/>
<evidence type="ECO:0007829" key="5">
    <source>
        <dbReference type="PDB" id="1BK1"/>
    </source>
</evidence>
<gene>
    <name type="primary">xynC</name>
    <name type="ORF">AKAW_07136</name>
</gene>
<comment type="catalytic activity">
    <reaction>
        <text>Endohydrolysis of (1-&gt;4)-beta-D-xylosidic linkages in xylans.</text>
        <dbReference type="EC" id="3.2.1.8"/>
    </reaction>
</comment>
<comment type="pathway">
    <text>Glycan degradation; xylan degradation.</text>
</comment>
<comment type="subcellular location">
    <subcellularLocation>
        <location>Secreted</location>
    </subcellularLocation>
</comment>
<comment type="similarity">
    <text evidence="4">Belongs to the glycosyl hydrolase 11 (cellulase G) family.</text>
</comment>
<feature type="signal peptide" evidence="3">
    <location>
        <begin position="1"/>
        <end position="27"/>
    </location>
</feature>
<feature type="chain" id="PRO_0000007991" description="Endo-1,4-beta-xylanase 3">
    <location>
        <begin position="28"/>
        <end position="211"/>
    </location>
</feature>
<feature type="domain" description="GH11" evidence="1">
    <location>
        <begin position="28"/>
        <end position="210"/>
    </location>
</feature>
<feature type="active site" description="Nucleophile" evidence="2">
    <location>
        <position position="106"/>
    </location>
</feature>
<feature type="active site" description="Proton donor">
    <location>
        <position position="197"/>
    </location>
</feature>
<feature type="disulfide bond">
    <location>
        <begin position="119"/>
        <end position="138"/>
    </location>
</feature>
<feature type="sequence conflict" description="In Ref. 1; AAC60542/BAA03576." evidence="4" ref="1">
    <original>F</original>
    <variation>S</variation>
    <location>
        <position position="7"/>
    </location>
</feature>
<feature type="sequence conflict" description="In Ref. 1; AAC60542/BAA03576." evidence="4" ref="1">
    <original>VT</original>
    <variation>GH</variation>
    <location>
        <begin position="12"/>
        <end position="13"/>
    </location>
</feature>
<feature type="sequence conflict" description="In Ref. 1; AAC60542/BAA03576." evidence="4" ref="1">
    <original>E</original>
    <variation>Q</variation>
    <location>
        <position position="21"/>
    </location>
</feature>
<feature type="sequence conflict" description="In Ref. 1; AAC60542/BAA03576." evidence="4" ref="1">
    <original>G</original>
    <variation>A</variation>
    <location>
        <position position="42"/>
    </location>
</feature>
<feature type="sequence conflict" description="In Ref. 1; AAC60542/BAA03576." evidence="4" ref="1">
    <original>T</original>
    <variation>S</variation>
    <location>
        <position position="80"/>
    </location>
</feature>
<feature type="strand" evidence="5">
    <location>
        <begin position="33"/>
        <end position="38"/>
    </location>
</feature>
<feature type="helix" evidence="5">
    <location>
        <begin position="39"/>
        <end position="41"/>
    </location>
</feature>
<feature type="strand" evidence="5">
    <location>
        <begin position="42"/>
        <end position="47"/>
    </location>
</feature>
<feature type="helix" evidence="5">
    <location>
        <begin position="48"/>
        <end position="50"/>
    </location>
</feature>
<feature type="strand" evidence="5">
    <location>
        <begin position="52"/>
        <end position="63"/>
    </location>
</feature>
<feature type="strand" evidence="5">
    <location>
        <begin position="65"/>
        <end position="73"/>
    </location>
</feature>
<feature type="strand" evidence="5">
    <location>
        <begin position="79"/>
        <end position="86"/>
    </location>
</feature>
<feature type="strand" evidence="5">
    <location>
        <begin position="90"/>
        <end position="100"/>
    </location>
</feature>
<feature type="turn" evidence="5">
    <location>
        <begin position="101"/>
        <end position="104"/>
    </location>
</feature>
<feature type="strand" evidence="5">
    <location>
        <begin position="105"/>
        <end position="115"/>
    </location>
</feature>
<feature type="turn" evidence="5">
    <location>
        <begin position="118"/>
        <end position="121"/>
    </location>
</feature>
<feature type="strand" evidence="5">
    <location>
        <begin position="122"/>
        <end position="130"/>
    </location>
</feature>
<feature type="strand" evidence="5">
    <location>
        <begin position="133"/>
        <end position="147"/>
    </location>
</feature>
<feature type="strand" evidence="5">
    <location>
        <begin position="150"/>
        <end position="163"/>
    </location>
</feature>
<feature type="strand" evidence="5">
    <location>
        <begin position="166"/>
        <end position="170"/>
    </location>
</feature>
<feature type="helix" evidence="5">
    <location>
        <begin position="172"/>
        <end position="179"/>
    </location>
</feature>
<feature type="helix" evidence="5">
    <location>
        <begin position="180"/>
        <end position="182"/>
    </location>
</feature>
<feature type="strand" evidence="5">
    <location>
        <begin position="187"/>
        <end position="210"/>
    </location>
</feature>